<comment type="function">
    <text evidence="1">DNA-dependent RNA polymerase catalyzes the transcription of DNA into RNA using the four ribonucleoside triphosphates as substrates. Second largest core component of RNA polymerase III which synthesizes small RNAs, such as 5S rRNA and tRNAs. Proposed to contribute to the polymerase catalytic activity and forms the polymerase active center together with the largest subunit. Pol III is composed of mobile elements and Polr3B is part of the core element with the central large cleft and probably a clamp element that moves to open and close the cleft (By similarity).</text>
</comment>
<comment type="catalytic activity">
    <reaction>
        <text>RNA(n) + a ribonucleoside 5'-triphosphate = RNA(n+1) + diphosphate</text>
        <dbReference type="Rhea" id="RHEA:21248"/>
        <dbReference type="Rhea" id="RHEA-COMP:14527"/>
        <dbReference type="Rhea" id="RHEA-COMP:17342"/>
        <dbReference type="ChEBI" id="CHEBI:33019"/>
        <dbReference type="ChEBI" id="CHEBI:61557"/>
        <dbReference type="ChEBI" id="CHEBI:140395"/>
        <dbReference type="EC" id="2.7.7.6"/>
    </reaction>
</comment>
<comment type="subunit">
    <text evidence="1">Component of the RNA polymerase III (Pol III) complex consisting of 17 subunits.</text>
</comment>
<comment type="subcellular location">
    <subcellularLocation>
        <location evidence="1">Nucleus</location>
    </subcellularLocation>
</comment>
<comment type="similarity">
    <text evidence="3">Belongs to the RNA polymerase beta chain family.</text>
</comment>
<comment type="sequence caution" evidence="3">
    <conflict type="erroneous initiation">
        <sequence resource="EMBL-CDS" id="AAM51972"/>
    </conflict>
</comment>
<keyword id="KW-0240">DNA-directed RNA polymerase</keyword>
<keyword id="KW-0479">Metal-binding</keyword>
<keyword id="KW-0548">Nucleotidyltransferase</keyword>
<keyword id="KW-0539">Nucleus</keyword>
<keyword id="KW-1185">Reference proteome</keyword>
<keyword id="KW-0804">Transcription</keyword>
<keyword id="KW-0808">Transferase</keyword>
<keyword id="KW-0862">Zinc</keyword>
<keyword id="KW-0863">Zinc-finger</keyword>
<accession>P25167</accession>
<accession>Q8MRD5</accession>
<accession>Q9V649</accession>
<feature type="chain" id="PRO_0000048094" description="DNA-directed RNA polymerase III subunit RPC2">
    <location>
        <begin position="1"/>
        <end position="1137"/>
    </location>
</feature>
<feature type="zinc finger region" description="C4-type">
    <location>
        <begin position="1084"/>
        <end position="1099"/>
    </location>
</feature>
<feature type="binding site" evidence="1">
    <location>
        <position position="1086"/>
    </location>
    <ligand>
        <name>Zn(2+)</name>
        <dbReference type="ChEBI" id="CHEBI:29105"/>
    </ligand>
</feature>
<feature type="binding site" evidence="1">
    <location>
        <position position="1089"/>
    </location>
    <ligand>
        <name>Zn(2+)</name>
        <dbReference type="ChEBI" id="CHEBI:29105"/>
    </ligand>
</feature>
<feature type="binding site" evidence="1">
    <location>
        <position position="1098"/>
    </location>
    <ligand>
        <name>Zn(2+)</name>
        <dbReference type="ChEBI" id="CHEBI:29105"/>
    </ligand>
</feature>
<feature type="binding site" evidence="1">
    <location>
        <position position="1101"/>
    </location>
    <ligand>
        <name>Zn(2+)</name>
        <dbReference type="ChEBI" id="CHEBI:29105"/>
    </ligand>
</feature>
<feature type="sequence conflict" description="In Ref. 1; CAA41631." evidence="3" ref="1">
    <location>
        <position position="150"/>
    </location>
</feature>
<feature type="sequence conflict" description="In Ref. 1; CAA41631." evidence="3" ref="1">
    <original>D</original>
    <variation>Y</variation>
    <location>
        <position position="490"/>
    </location>
</feature>
<feature type="sequence conflict" description="In Ref. 1; CAA41631." evidence="3" ref="1">
    <original>P</original>
    <variation>T</variation>
    <location>
        <position position="668"/>
    </location>
</feature>
<feature type="sequence conflict" description="In Ref. 1; CAA41631." evidence="3" ref="1">
    <original>QK</original>
    <variation>HN</variation>
    <location>
        <begin position="708"/>
        <end position="709"/>
    </location>
</feature>
<feature type="sequence conflict" description="In Ref. 1; CAA41631." evidence="3" ref="1">
    <original>EI</original>
    <variation>R</variation>
    <location>
        <begin position="898"/>
        <end position="899"/>
    </location>
</feature>
<protein>
    <recommendedName>
        <fullName>DNA-directed RNA polymerase III subunit RPC2</fullName>
        <shortName>RNA polymerase III subunit C2</shortName>
        <ecNumber>2.7.7.6</ecNumber>
    </recommendedName>
    <alternativeName>
        <fullName>DNA-directed RNA polymerase III 128 kDa polypeptide</fullName>
        <shortName>C128</shortName>
    </alternativeName>
    <alternativeName>
        <fullName evidence="4">DNA-directed RNA polymerase III subunit B</fullName>
    </alternativeName>
</protein>
<proteinExistence type="evidence at transcript level"/>
<evidence type="ECO:0000250" key="1"/>
<evidence type="ECO:0000303" key="2">
    <source>
    </source>
</evidence>
<evidence type="ECO:0000305" key="3"/>
<evidence type="ECO:0000312" key="4">
    <source>
        <dbReference type="FlyBase" id="FBgn0004463"/>
    </source>
</evidence>
<reference key="1">
    <citation type="journal article" date="1991" name="Mol. Gen. Genet.">
        <title>Identification of the genes coding for the second-largest subunits of RNA polymerases I and III of Drosophila melanogaster.</title>
        <authorList>
            <person name="Seifarth W."/>
            <person name="Petersen G."/>
            <person name="Kontermann R."/>
            <person name="Riva M."/>
            <person name="Huet J.-C."/>
            <person name="Bautz E.K.F."/>
        </authorList>
    </citation>
    <scope>NUCLEOTIDE SEQUENCE [GENOMIC DNA]</scope>
    <source>
        <strain>Oregon-R</strain>
    </source>
</reference>
<reference key="2">
    <citation type="journal article" date="2000" name="Science">
        <title>The genome sequence of Drosophila melanogaster.</title>
        <authorList>
            <person name="Adams M.D."/>
            <person name="Celniker S.E."/>
            <person name="Holt R.A."/>
            <person name="Evans C.A."/>
            <person name="Gocayne J.D."/>
            <person name="Amanatides P.G."/>
            <person name="Scherer S.E."/>
            <person name="Li P.W."/>
            <person name="Hoskins R.A."/>
            <person name="Galle R.F."/>
            <person name="George R.A."/>
            <person name="Lewis S.E."/>
            <person name="Richards S."/>
            <person name="Ashburner M."/>
            <person name="Henderson S.N."/>
            <person name="Sutton G.G."/>
            <person name="Wortman J.R."/>
            <person name="Yandell M.D."/>
            <person name="Zhang Q."/>
            <person name="Chen L.X."/>
            <person name="Brandon R.C."/>
            <person name="Rogers Y.-H.C."/>
            <person name="Blazej R.G."/>
            <person name="Champe M."/>
            <person name="Pfeiffer B.D."/>
            <person name="Wan K.H."/>
            <person name="Doyle C."/>
            <person name="Baxter E.G."/>
            <person name="Helt G."/>
            <person name="Nelson C.R."/>
            <person name="Miklos G.L.G."/>
            <person name="Abril J.F."/>
            <person name="Agbayani A."/>
            <person name="An H.-J."/>
            <person name="Andrews-Pfannkoch C."/>
            <person name="Baldwin D."/>
            <person name="Ballew R.M."/>
            <person name="Basu A."/>
            <person name="Baxendale J."/>
            <person name="Bayraktaroglu L."/>
            <person name="Beasley E.M."/>
            <person name="Beeson K.Y."/>
            <person name="Benos P.V."/>
            <person name="Berman B.P."/>
            <person name="Bhandari D."/>
            <person name="Bolshakov S."/>
            <person name="Borkova D."/>
            <person name="Botchan M.R."/>
            <person name="Bouck J."/>
            <person name="Brokstein P."/>
            <person name="Brottier P."/>
            <person name="Burtis K.C."/>
            <person name="Busam D.A."/>
            <person name="Butler H."/>
            <person name="Cadieu E."/>
            <person name="Center A."/>
            <person name="Chandra I."/>
            <person name="Cherry J.M."/>
            <person name="Cawley S."/>
            <person name="Dahlke C."/>
            <person name="Davenport L.B."/>
            <person name="Davies P."/>
            <person name="de Pablos B."/>
            <person name="Delcher A."/>
            <person name="Deng Z."/>
            <person name="Mays A.D."/>
            <person name="Dew I."/>
            <person name="Dietz S.M."/>
            <person name="Dodson K."/>
            <person name="Doup L.E."/>
            <person name="Downes M."/>
            <person name="Dugan-Rocha S."/>
            <person name="Dunkov B.C."/>
            <person name="Dunn P."/>
            <person name="Durbin K.J."/>
            <person name="Evangelista C.C."/>
            <person name="Ferraz C."/>
            <person name="Ferriera S."/>
            <person name="Fleischmann W."/>
            <person name="Fosler C."/>
            <person name="Gabrielian A.E."/>
            <person name="Garg N.S."/>
            <person name="Gelbart W.M."/>
            <person name="Glasser K."/>
            <person name="Glodek A."/>
            <person name="Gong F."/>
            <person name="Gorrell J.H."/>
            <person name="Gu Z."/>
            <person name="Guan P."/>
            <person name="Harris M."/>
            <person name="Harris N.L."/>
            <person name="Harvey D.A."/>
            <person name="Heiman T.J."/>
            <person name="Hernandez J.R."/>
            <person name="Houck J."/>
            <person name="Hostin D."/>
            <person name="Houston K.A."/>
            <person name="Howland T.J."/>
            <person name="Wei M.-H."/>
            <person name="Ibegwam C."/>
            <person name="Jalali M."/>
            <person name="Kalush F."/>
            <person name="Karpen G.H."/>
            <person name="Ke Z."/>
            <person name="Kennison J.A."/>
            <person name="Ketchum K.A."/>
            <person name="Kimmel B.E."/>
            <person name="Kodira C.D."/>
            <person name="Kraft C.L."/>
            <person name="Kravitz S."/>
            <person name="Kulp D."/>
            <person name="Lai Z."/>
            <person name="Lasko P."/>
            <person name="Lei Y."/>
            <person name="Levitsky A.A."/>
            <person name="Li J.H."/>
            <person name="Li Z."/>
            <person name="Liang Y."/>
            <person name="Lin X."/>
            <person name="Liu X."/>
            <person name="Mattei B."/>
            <person name="McIntosh T.C."/>
            <person name="McLeod M.P."/>
            <person name="McPherson D."/>
            <person name="Merkulov G."/>
            <person name="Milshina N.V."/>
            <person name="Mobarry C."/>
            <person name="Morris J."/>
            <person name="Moshrefi A."/>
            <person name="Mount S.M."/>
            <person name="Moy M."/>
            <person name="Murphy B."/>
            <person name="Murphy L."/>
            <person name="Muzny D.M."/>
            <person name="Nelson D.L."/>
            <person name="Nelson D.R."/>
            <person name="Nelson K.A."/>
            <person name="Nixon K."/>
            <person name="Nusskern D.R."/>
            <person name="Pacleb J.M."/>
            <person name="Palazzolo M."/>
            <person name="Pittman G.S."/>
            <person name="Pan S."/>
            <person name="Pollard J."/>
            <person name="Puri V."/>
            <person name="Reese M.G."/>
            <person name="Reinert K."/>
            <person name="Remington K."/>
            <person name="Saunders R.D.C."/>
            <person name="Scheeler F."/>
            <person name="Shen H."/>
            <person name="Shue B.C."/>
            <person name="Siden-Kiamos I."/>
            <person name="Simpson M."/>
            <person name="Skupski M.P."/>
            <person name="Smith T.J."/>
            <person name="Spier E."/>
            <person name="Spradling A.C."/>
            <person name="Stapleton M."/>
            <person name="Strong R."/>
            <person name="Sun E."/>
            <person name="Svirskas R."/>
            <person name="Tector C."/>
            <person name="Turner R."/>
            <person name="Venter E."/>
            <person name="Wang A.H."/>
            <person name="Wang X."/>
            <person name="Wang Z.-Y."/>
            <person name="Wassarman D.A."/>
            <person name="Weinstock G.M."/>
            <person name="Weissenbach J."/>
            <person name="Williams S.M."/>
            <person name="Woodage T."/>
            <person name="Worley K.C."/>
            <person name="Wu D."/>
            <person name="Yang S."/>
            <person name="Yao Q.A."/>
            <person name="Ye J."/>
            <person name="Yeh R.-F."/>
            <person name="Zaveri J.S."/>
            <person name="Zhan M."/>
            <person name="Zhang G."/>
            <person name="Zhao Q."/>
            <person name="Zheng L."/>
            <person name="Zheng X.H."/>
            <person name="Zhong F.N."/>
            <person name="Zhong W."/>
            <person name="Zhou X."/>
            <person name="Zhu S.C."/>
            <person name="Zhu X."/>
            <person name="Smith H.O."/>
            <person name="Gibbs R.A."/>
            <person name="Myers E.W."/>
            <person name="Rubin G.M."/>
            <person name="Venter J.C."/>
        </authorList>
    </citation>
    <scope>NUCLEOTIDE SEQUENCE [LARGE SCALE GENOMIC DNA]</scope>
    <source>
        <strain>Berkeley</strain>
    </source>
</reference>
<reference key="3">
    <citation type="journal article" date="2002" name="Genome Biol.">
        <title>Annotation of the Drosophila melanogaster euchromatic genome: a systematic review.</title>
        <authorList>
            <person name="Misra S."/>
            <person name="Crosby M.A."/>
            <person name="Mungall C.J."/>
            <person name="Matthews B.B."/>
            <person name="Campbell K.S."/>
            <person name="Hradecky P."/>
            <person name="Huang Y."/>
            <person name="Kaminker J.S."/>
            <person name="Millburn G.H."/>
            <person name="Prochnik S.E."/>
            <person name="Smith C.D."/>
            <person name="Tupy J.L."/>
            <person name="Whitfield E.J."/>
            <person name="Bayraktaroglu L."/>
            <person name="Berman B.P."/>
            <person name="Bettencourt B.R."/>
            <person name="Celniker S.E."/>
            <person name="de Grey A.D.N.J."/>
            <person name="Drysdale R.A."/>
            <person name="Harris N.L."/>
            <person name="Richter J."/>
            <person name="Russo S."/>
            <person name="Schroeder A.J."/>
            <person name="Shu S.Q."/>
            <person name="Stapleton M."/>
            <person name="Yamada C."/>
            <person name="Ashburner M."/>
            <person name="Gelbart W.M."/>
            <person name="Rubin G.M."/>
            <person name="Lewis S.E."/>
        </authorList>
    </citation>
    <scope>GENOME REANNOTATION</scope>
    <source>
        <strain>Berkeley</strain>
    </source>
</reference>
<reference key="4">
    <citation type="journal article" date="2002" name="Genome Biol.">
        <title>A Drosophila full-length cDNA resource.</title>
        <authorList>
            <person name="Stapleton M."/>
            <person name="Carlson J.W."/>
            <person name="Brokstein P."/>
            <person name="Yu C."/>
            <person name="Champe M."/>
            <person name="George R.A."/>
            <person name="Guarin H."/>
            <person name="Kronmiller B."/>
            <person name="Pacleb J.M."/>
            <person name="Park S."/>
            <person name="Wan K.H."/>
            <person name="Rubin G.M."/>
            <person name="Celniker S.E."/>
        </authorList>
    </citation>
    <scope>NUCLEOTIDE SEQUENCE [LARGE SCALE MRNA]</scope>
    <source>
        <strain>Berkeley</strain>
        <tissue>Embryo</tissue>
    </source>
</reference>
<organism>
    <name type="scientific">Drosophila melanogaster</name>
    <name type="common">Fruit fly</name>
    <dbReference type="NCBI Taxonomy" id="7227"/>
    <lineage>
        <taxon>Eukaryota</taxon>
        <taxon>Metazoa</taxon>
        <taxon>Ecdysozoa</taxon>
        <taxon>Arthropoda</taxon>
        <taxon>Hexapoda</taxon>
        <taxon>Insecta</taxon>
        <taxon>Pterygota</taxon>
        <taxon>Neoptera</taxon>
        <taxon>Endopterygota</taxon>
        <taxon>Diptera</taxon>
        <taxon>Brachycera</taxon>
        <taxon>Muscomorpha</taxon>
        <taxon>Ephydroidea</taxon>
        <taxon>Drosophilidae</taxon>
        <taxon>Drosophila</taxon>
        <taxon>Sophophora</taxon>
    </lineage>
</organism>
<gene>
    <name evidence="4" type="primary">Polr3B</name>
    <name evidence="2" type="synonym">Rp128</name>
    <name evidence="3" type="synonym">RPC2</name>
    <name evidence="4" type="synonym">RpIII128</name>
    <name evidence="4" type="ORF">CG8344</name>
</gene>
<name>RPC2_DROME</name>
<sequence>MVELKMGDHNVEATTWDPGDSKDWSVPIKPLTEKWKLVPAFLQVKGLVKQHIDSFNHFINVDIKKIVKANELVTSGADPLFYLKYLDVRVGKPDIDDGFNITKATTPHECRLRDTTYSAPITVDIEYTRGTQRIKRNNLLIGRMPLMLRCSNCALTGKSEFELSKLNECPLDPGGYFVVRGQEKVILIQEQLSWNKMLTEDFNGVVQCQVTSSTHEKKSRTLVLSKHGKYYLKHNSMTDDIPIVVIFKALGVVSDQEIQSLIGIDSKSQNRFGASLIDAYNLKVFTQQRALEYMGSKLVVKRFQSATTKTPSEEARELLLTTILAHVPVDNFNLQMKAIYVSMMVRRVMAAELDKTLFDDRDYYGNKRLELAGSLLSMMFEDLFKRMNWELKTIADKNIPKVKAAQFDVVKHMRAAQITAGLESAISSGNWTIKRFKMERAGVTQVLSRLSYISALGMMTRVNSQFEKTRKVSGPRSLQPSQWGMLCPSDTPEGEACGLVKNLALMTHITTEVEERPVMIVAFNAGVEDIREVSGNPINNPNVFLVFINGNVLGLTLNHKHLVRNLRYMRRKGRMGSYVSVHTSYTQRCIYIHTDGGRLCRPYVIVENRRPLVKQHHLDELNRGIRKFDDFLLDGLIEYLDVNEENDSFIAWNEDQIEDRTTHLEIEPFTLLGVCAGLVPYPHHNQSPRNTYQCAMGKQAMGMIGYNQKNRIDSLMYNLVYPHAPMVKSKTIELTNFDKLPAGQNATVAVMSYSGYDIEDALILNKASIDRGYGRCLVYKNSKCTVKRYANQTFDRIMGPMKDALTNKVIFKHDVLDTDGIVAPGEQVQNKQIMINKEMPAVTSMNPLQGQSAQVPYTAVPISYKGPEPSYIERVMVSANAEEDFLIKILLRQTRIPEIGDKFSSRHGQKGVTGLIVEQEDMPFNDFGICPDMIMNPHGFPSRMTVGKTLELLGGKAGLLEGKFHYGTAFGGSKVEDIQAELERHGFNYVGKDFFYSGITGTPLEAYIYSGPVYYQKLKHMVQDKMHARARGPKAVLTRQPTQGRSREGGLRLGEMERDCLISYGASMLIMERLMISSDAFEVDVCRTCGRMAYCSWCHFCQSSANVSKISMPYACKLLFQELTSMNVVPKMILENY</sequence>
<dbReference type="EC" id="2.7.7.6"/>
<dbReference type="EMBL" id="X58826">
    <property type="protein sequence ID" value="CAA41631.1"/>
    <property type="molecule type" value="Genomic_DNA"/>
</dbReference>
<dbReference type="EMBL" id="AE013599">
    <property type="protein sequence ID" value="AAF58590.1"/>
    <property type="molecule type" value="Genomic_DNA"/>
</dbReference>
<dbReference type="EMBL" id="AY121645">
    <property type="protein sequence ID" value="AAM51972.1"/>
    <property type="status" value="ALT_INIT"/>
    <property type="molecule type" value="mRNA"/>
</dbReference>
<dbReference type="PIR" id="S16894">
    <property type="entry name" value="RNFF32"/>
</dbReference>
<dbReference type="RefSeq" id="NP_523706.1">
    <property type="nucleotide sequence ID" value="NM_078982.3"/>
</dbReference>
<dbReference type="SMR" id="P25167"/>
<dbReference type="BioGRID" id="62073">
    <property type="interactions" value="6"/>
</dbReference>
<dbReference type="ComplexPortal" id="CPX-2628">
    <property type="entry name" value="DNA-directed RNA polymerase III complex"/>
</dbReference>
<dbReference type="FunCoup" id="P25167">
    <property type="interactions" value="1591"/>
</dbReference>
<dbReference type="IntAct" id="P25167">
    <property type="interactions" value="7"/>
</dbReference>
<dbReference type="STRING" id="7227.FBpp0087085"/>
<dbReference type="PaxDb" id="7227-FBpp0087085"/>
<dbReference type="DNASU" id="36289"/>
<dbReference type="EnsemblMetazoa" id="FBtr0087977">
    <property type="protein sequence ID" value="FBpp0087085"/>
    <property type="gene ID" value="FBgn0004463"/>
</dbReference>
<dbReference type="GeneID" id="36289"/>
<dbReference type="KEGG" id="dme:Dmel_CG8344"/>
<dbReference type="AGR" id="FB:FBgn0004463"/>
<dbReference type="CTD" id="55703"/>
<dbReference type="FlyBase" id="FBgn0004463">
    <property type="gene designation" value="Polr3B"/>
</dbReference>
<dbReference type="VEuPathDB" id="VectorBase:FBgn0004463"/>
<dbReference type="eggNOG" id="KOG0215">
    <property type="taxonomic scope" value="Eukaryota"/>
</dbReference>
<dbReference type="GeneTree" id="ENSGT00950000183132"/>
<dbReference type="HOGENOM" id="CLU_000524_5_1_1"/>
<dbReference type="InParanoid" id="P25167"/>
<dbReference type="OMA" id="LAYCSWC"/>
<dbReference type="OrthoDB" id="10248617at2759"/>
<dbReference type="PhylomeDB" id="P25167"/>
<dbReference type="Reactome" id="R-DME-76061">
    <property type="pathway name" value="RNA Polymerase III Transcription Initiation From Type 1 Promoter"/>
</dbReference>
<dbReference type="Reactome" id="R-DME-76066">
    <property type="pathway name" value="RNA Polymerase III Transcription Initiation From Type 2 Promoter"/>
</dbReference>
<dbReference type="SignaLink" id="P25167"/>
<dbReference type="BioGRID-ORCS" id="36289">
    <property type="hits" value="0 hits in 1 CRISPR screen"/>
</dbReference>
<dbReference type="ChiTaRS" id="RpIII128">
    <property type="organism name" value="fly"/>
</dbReference>
<dbReference type="GenomeRNAi" id="36289"/>
<dbReference type="PRO" id="PR:P25167"/>
<dbReference type="Proteomes" id="UP000000803">
    <property type="component" value="Chromosome 2R"/>
</dbReference>
<dbReference type="Bgee" id="FBgn0004463">
    <property type="expression patterns" value="Expressed in eye disc (Drosophila) and 31 other cell types or tissues"/>
</dbReference>
<dbReference type="GO" id="GO:0005739">
    <property type="term" value="C:mitochondrion"/>
    <property type="evidence" value="ECO:0007669"/>
    <property type="project" value="GOC"/>
</dbReference>
<dbReference type="GO" id="GO:0005666">
    <property type="term" value="C:RNA polymerase III complex"/>
    <property type="evidence" value="ECO:0000250"/>
    <property type="project" value="FlyBase"/>
</dbReference>
<dbReference type="GO" id="GO:0003677">
    <property type="term" value="F:DNA binding"/>
    <property type="evidence" value="ECO:0007669"/>
    <property type="project" value="InterPro"/>
</dbReference>
<dbReference type="GO" id="GO:0003899">
    <property type="term" value="F:DNA-directed RNA polymerase activity"/>
    <property type="evidence" value="ECO:0007669"/>
    <property type="project" value="UniProtKB-EC"/>
</dbReference>
<dbReference type="GO" id="GO:0032549">
    <property type="term" value="F:ribonucleoside binding"/>
    <property type="evidence" value="ECO:0007669"/>
    <property type="project" value="InterPro"/>
</dbReference>
<dbReference type="GO" id="GO:0008270">
    <property type="term" value="F:zinc ion binding"/>
    <property type="evidence" value="ECO:0007669"/>
    <property type="project" value="UniProtKB-KW"/>
</dbReference>
<dbReference type="GO" id="GO:0042797">
    <property type="term" value="P:tRNA transcription by RNA polymerase III"/>
    <property type="evidence" value="ECO:0000250"/>
    <property type="project" value="FlyBase"/>
</dbReference>
<dbReference type="CDD" id="cd00653">
    <property type="entry name" value="RNA_pol_B_RPB2"/>
    <property type="match status" value="1"/>
</dbReference>
<dbReference type="FunFam" id="2.40.270.10:FF:000006">
    <property type="entry name" value="DNA-directed RNA polymerase subunit beta"/>
    <property type="match status" value="1"/>
</dbReference>
<dbReference type="FunFam" id="2.40.270.10:FF:000011">
    <property type="entry name" value="DNA-directed RNA polymerase subunit beta"/>
    <property type="match status" value="1"/>
</dbReference>
<dbReference type="FunFam" id="2.40.50.150:FF:000003">
    <property type="entry name" value="DNA-directed RNA polymerase subunit beta"/>
    <property type="match status" value="1"/>
</dbReference>
<dbReference type="FunFam" id="3.90.1070.20:FF:000002">
    <property type="entry name" value="DNA-directed RNA polymerase subunit beta"/>
    <property type="match status" value="1"/>
</dbReference>
<dbReference type="FunFam" id="3.90.1100.10:FF:000006">
    <property type="entry name" value="DNA-directed RNA polymerase subunit beta"/>
    <property type="match status" value="1"/>
</dbReference>
<dbReference type="FunFam" id="3.90.1100.10:FF:000021">
    <property type="entry name" value="DNA-directed RNA polymerase subunit beta"/>
    <property type="match status" value="1"/>
</dbReference>
<dbReference type="FunFam" id="3.90.1110.10:FF:000006">
    <property type="entry name" value="DNA-directed RNA polymerase subunit beta"/>
    <property type="match status" value="1"/>
</dbReference>
<dbReference type="FunFam" id="3.90.1800.10:FF:000003">
    <property type="entry name" value="DNA-directed RNA polymerase subunit beta"/>
    <property type="match status" value="1"/>
</dbReference>
<dbReference type="Gene3D" id="2.40.50.150">
    <property type="match status" value="1"/>
</dbReference>
<dbReference type="Gene3D" id="3.90.1070.20">
    <property type="match status" value="1"/>
</dbReference>
<dbReference type="Gene3D" id="3.90.1100.10">
    <property type="match status" value="1"/>
</dbReference>
<dbReference type="Gene3D" id="2.40.270.10">
    <property type="entry name" value="DNA-directed RNA polymerase, subunit 2, domain 6"/>
    <property type="match status" value="1"/>
</dbReference>
<dbReference type="Gene3D" id="3.90.1800.10">
    <property type="entry name" value="RNA polymerase alpha subunit dimerisation domain"/>
    <property type="match status" value="1"/>
</dbReference>
<dbReference type="Gene3D" id="3.90.1110.10">
    <property type="entry name" value="RNA polymerase Rpb2, domain 2"/>
    <property type="match status" value="1"/>
</dbReference>
<dbReference type="InterPro" id="IPR015712">
    <property type="entry name" value="DNA-dir_RNA_pol_su2"/>
</dbReference>
<dbReference type="InterPro" id="IPR007120">
    <property type="entry name" value="DNA-dir_RNAP_su2_dom"/>
</dbReference>
<dbReference type="InterPro" id="IPR037033">
    <property type="entry name" value="DNA-dir_RNAP_su2_hyb_sf"/>
</dbReference>
<dbReference type="InterPro" id="IPR007121">
    <property type="entry name" value="RNA_pol_bsu_CS"/>
</dbReference>
<dbReference type="InterPro" id="IPR007644">
    <property type="entry name" value="RNA_pol_bsu_protrusion"/>
</dbReference>
<dbReference type="InterPro" id="IPR007642">
    <property type="entry name" value="RNA_pol_Rpb2_2"/>
</dbReference>
<dbReference type="InterPro" id="IPR037034">
    <property type="entry name" value="RNA_pol_Rpb2_2_sf"/>
</dbReference>
<dbReference type="InterPro" id="IPR007645">
    <property type="entry name" value="RNA_pol_Rpb2_3"/>
</dbReference>
<dbReference type="InterPro" id="IPR007646">
    <property type="entry name" value="RNA_pol_Rpb2_4"/>
</dbReference>
<dbReference type="InterPro" id="IPR007647">
    <property type="entry name" value="RNA_pol_Rpb2_5"/>
</dbReference>
<dbReference type="InterPro" id="IPR007641">
    <property type="entry name" value="RNA_pol_Rpb2_7"/>
</dbReference>
<dbReference type="InterPro" id="IPR014724">
    <property type="entry name" value="RNA_pol_RPB2_OB-fold"/>
</dbReference>
<dbReference type="PANTHER" id="PTHR20856">
    <property type="entry name" value="DNA-DIRECTED RNA POLYMERASE I SUBUNIT 2"/>
    <property type="match status" value="1"/>
</dbReference>
<dbReference type="Pfam" id="PF04563">
    <property type="entry name" value="RNA_pol_Rpb2_1"/>
    <property type="match status" value="1"/>
</dbReference>
<dbReference type="Pfam" id="PF04561">
    <property type="entry name" value="RNA_pol_Rpb2_2"/>
    <property type="match status" value="1"/>
</dbReference>
<dbReference type="Pfam" id="PF04565">
    <property type="entry name" value="RNA_pol_Rpb2_3"/>
    <property type="match status" value="1"/>
</dbReference>
<dbReference type="Pfam" id="PF04566">
    <property type="entry name" value="RNA_pol_Rpb2_4"/>
    <property type="match status" value="1"/>
</dbReference>
<dbReference type="Pfam" id="PF04567">
    <property type="entry name" value="RNA_pol_Rpb2_5"/>
    <property type="match status" value="1"/>
</dbReference>
<dbReference type="Pfam" id="PF00562">
    <property type="entry name" value="RNA_pol_Rpb2_6"/>
    <property type="match status" value="1"/>
</dbReference>
<dbReference type="Pfam" id="PF04560">
    <property type="entry name" value="RNA_pol_Rpb2_7"/>
    <property type="match status" value="1"/>
</dbReference>
<dbReference type="SUPFAM" id="SSF64484">
    <property type="entry name" value="beta and beta-prime subunits of DNA dependent RNA-polymerase"/>
    <property type="match status" value="1"/>
</dbReference>
<dbReference type="PROSITE" id="PS01166">
    <property type="entry name" value="RNA_POL_BETA"/>
    <property type="match status" value="1"/>
</dbReference>